<sequence length="172" mass="20579">MSAQVSLELHHRISQFLFHEASLLDDWKFRDWLAQLDEEIRYTMRTTVNAQTRDRRKGVQPPTTWIFNDTKDQLERRIARLETGMAWAEEPPSRTRHLISNCQISETDIPNVFAVRVNYLLYRAQKERDETFYVGTRFDKVRRLEDDNWRLLERDIVLDQAVITSHNLSVLF</sequence>
<dbReference type="EC" id="1.14.12.19" evidence="1"/>
<dbReference type="EMBL" id="CU928160">
    <property type="protein sequence ID" value="CAQ99430.1"/>
    <property type="molecule type" value="Genomic_DNA"/>
</dbReference>
<dbReference type="RefSeq" id="WP_001276072.1">
    <property type="nucleotide sequence ID" value="NC_011741.1"/>
</dbReference>
<dbReference type="SMR" id="B7M7P2"/>
<dbReference type="GeneID" id="75206232"/>
<dbReference type="KEGG" id="ecr:ECIAI1_2591"/>
<dbReference type="HOGENOM" id="CLU_102527_1_1_6"/>
<dbReference type="UniPathway" id="UPA00714"/>
<dbReference type="GO" id="GO:0008695">
    <property type="term" value="F:3-phenylpropionate dioxygenase activity"/>
    <property type="evidence" value="ECO:0007669"/>
    <property type="project" value="UniProtKB-UniRule"/>
</dbReference>
<dbReference type="GO" id="GO:0019380">
    <property type="term" value="P:3-phenylpropionate catabolic process"/>
    <property type="evidence" value="ECO:0007669"/>
    <property type="project" value="UniProtKB-UniRule"/>
</dbReference>
<dbReference type="CDD" id="cd00667">
    <property type="entry name" value="ring_hydroxylating_dioxygenases_beta"/>
    <property type="match status" value="1"/>
</dbReference>
<dbReference type="FunFam" id="3.10.450.50:FF:000008">
    <property type="entry name" value="3-phenylpropionate/cinnamic acid dioxygenase subunit beta"/>
    <property type="match status" value="1"/>
</dbReference>
<dbReference type="Gene3D" id="3.10.450.50">
    <property type="match status" value="1"/>
</dbReference>
<dbReference type="HAMAP" id="MF_01649">
    <property type="entry name" value="HcaF"/>
    <property type="match status" value="1"/>
</dbReference>
<dbReference type="InterPro" id="IPR054881">
    <property type="entry name" value="3PPDioc_HcaF"/>
</dbReference>
<dbReference type="InterPro" id="IPR023712">
    <property type="entry name" value="HcaF"/>
</dbReference>
<dbReference type="InterPro" id="IPR032710">
    <property type="entry name" value="NTF2-like_dom_sf"/>
</dbReference>
<dbReference type="InterPro" id="IPR000391">
    <property type="entry name" value="Rng_hydr_dOase-bsu"/>
</dbReference>
<dbReference type="NCBIfam" id="NF042947">
    <property type="entry name" value="3PPDioc_HcaF"/>
    <property type="match status" value="1"/>
</dbReference>
<dbReference type="NCBIfam" id="NF007479">
    <property type="entry name" value="PRK10069.1"/>
    <property type="match status" value="1"/>
</dbReference>
<dbReference type="PANTHER" id="PTHR41534:SF2">
    <property type="entry name" value="3-PHENYLPROPIONATE_CINNAMIC ACID DIOXYGENASE SUBUNIT BETA"/>
    <property type="match status" value="1"/>
</dbReference>
<dbReference type="PANTHER" id="PTHR41534">
    <property type="entry name" value="BLR3401 PROTEIN"/>
    <property type="match status" value="1"/>
</dbReference>
<dbReference type="Pfam" id="PF00866">
    <property type="entry name" value="Ring_hydroxyl_B"/>
    <property type="match status" value="1"/>
</dbReference>
<dbReference type="SUPFAM" id="SSF54427">
    <property type="entry name" value="NTF2-like"/>
    <property type="match status" value="1"/>
</dbReference>
<feature type="chain" id="PRO_1000186975" description="3-phenylpropionate/cinnamic acid dioxygenase subunit beta">
    <location>
        <begin position="1"/>
        <end position="172"/>
    </location>
</feature>
<evidence type="ECO:0000255" key="1">
    <source>
        <dbReference type="HAMAP-Rule" id="MF_01649"/>
    </source>
</evidence>
<name>HCAF_ECO8A</name>
<reference key="1">
    <citation type="journal article" date="2009" name="PLoS Genet.">
        <title>Organised genome dynamics in the Escherichia coli species results in highly diverse adaptive paths.</title>
        <authorList>
            <person name="Touchon M."/>
            <person name="Hoede C."/>
            <person name="Tenaillon O."/>
            <person name="Barbe V."/>
            <person name="Baeriswyl S."/>
            <person name="Bidet P."/>
            <person name="Bingen E."/>
            <person name="Bonacorsi S."/>
            <person name="Bouchier C."/>
            <person name="Bouvet O."/>
            <person name="Calteau A."/>
            <person name="Chiapello H."/>
            <person name="Clermont O."/>
            <person name="Cruveiller S."/>
            <person name="Danchin A."/>
            <person name="Diard M."/>
            <person name="Dossat C."/>
            <person name="Karoui M.E."/>
            <person name="Frapy E."/>
            <person name="Garry L."/>
            <person name="Ghigo J.M."/>
            <person name="Gilles A.M."/>
            <person name="Johnson J."/>
            <person name="Le Bouguenec C."/>
            <person name="Lescat M."/>
            <person name="Mangenot S."/>
            <person name="Martinez-Jehanne V."/>
            <person name="Matic I."/>
            <person name="Nassif X."/>
            <person name="Oztas S."/>
            <person name="Petit M.A."/>
            <person name="Pichon C."/>
            <person name="Rouy Z."/>
            <person name="Ruf C.S."/>
            <person name="Schneider D."/>
            <person name="Tourret J."/>
            <person name="Vacherie B."/>
            <person name="Vallenet D."/>
            <person name="Medigue C."/>
            <person name="Rocha E.P.C."/>
            <person name="Denamur E."/>
        </authorList>
    </citation>
    <scope>NUCLEOTIDE SEQUENCE [LARGE SCALE GENOMIC DNA]</scope>
    <source>
        <strain>IAI1</strain>
    </source>
</reference>
<organism>
    <name type="scientific">Escherichia coli O8 (strain IAI1)</name>
    <dbReference type="NCBI Taxonomy" id="585034"/>
    <lineage>
        <taxon>Bacteria</taxon>
        <taxon>Pseudomonadati</taxon>
        <taxon>Pseudomonadota</taxon>
        <taxon>Gammaproteobacteria</taxon>
        <taxon>Enterobacterales</taxon>
        <taxon>Enterobacteriaceae</taxon>
        <taxon>Escherichia</taxon>
    </lineage>
</organism>
<keyword id="KW-0058">Aromatic hydrocarbons catabolism</keyword>
<keyword id="KW-0223">Dioxygenase</keyword>
<keyword id="KW-0520">NAD</keyword>
<keyword id="KW-0560">Oxidoreductase</keyword>
<accession>B7M7P2</accession>
<gene>
    <name evidence="1" type="primary">hcaF</name>
    <name type="ordered locus">ECIAI1_2591</name>
</gene>
<proteinExistence type="inferred from homology"/>
<protein>
    <recommendedName>
        <fullName evidence="1">3-phenylpropionate/cinnamic acid dioxygenase subunit beta</fullName>
        <ecNumber evidence="1">1.14.12.19</ecNumber>
    </recommendedName>
</protein>
<comment type="function">
    <text evidence="1">Part of the multicomponent 3-phenylpropionate dioxygenase. Converts 3-phenylpropionic acid (PP) and cinnamic acid (CI) into 3-phenylpropionate-dihydrodiol (PP-dihydrodiol) and cinnamic acid-dihydrodiol (CI-dihydrodiol), respectively.</text>
</comment>
<comment type="catalytic activity">
    <reaction evidence="1">
        <text>3-phenylpropanoate + NADH + O2 + H(+) = 3-(cis-5,6-dihydroxycyclohexa-1,3-dien-1-yl)propanoate + NAD(+)</text>
        <dbReference type="Rhea" id="RHEA:20357"/>
        <dbReference type="ChEBI" id="CHEBI:15378"/>
        <dbReference type="ChEBI" id="CHEBI:15379"/>
        <dbReference type="ChEBI" id="CHEBI:51057"/>
        <dbReference type="ChEBI" id="CHEBI:57540"/>
        <dbReference type="ChEBI" id="CHEBI:57945"/>
        <dbReference type="ChEBI" id="CHEBI:60087"/>
        <dbReference type="EC" id="1.14.12.19"/>
    </reaction>
</comment>
<comment type="catalytic activity">
    <reaction evidence="1">
        <text>(E)-cinnamate + NADH + O2 + H(+) = (2E)-3-(cis-5,6-dihydroxycyclohexa-1,3-dien-1-yl)prop-2-enoate + NAD(+)</text>
        <dbReference type="Rhea" id="RHEA:25058"/>
        <dbReference type="ChEBI" id="CHEBI:15378"/>
        <dbReference type="ChEBI" id="CHEBI:15379"/>
        <dbReference type="ChEBI" id="CHEBI:15669"/>
        <dbReference type="ChEBI" id="CHEBI:57540"/>
        <dbReference type="ChEBI" id="CHEBI:57945"/>
        <dbReference type="ChEBI" id="CHEBI:61451"/>
        <dbReference type="EC" id="1.14.12.19"/>
    </reaction>
</comment>
<comment type="pathway">
    <text evidence="1">Aromatic compound metabolism; 3-phenylpropanoate degradation.</text>
</comment>
<comment type="subunit">
    <text evidence="1">This dioxygenase system consists of four proteins: the two subunits of the hydroxylase component (HcaE and HcaF), a ferredoxin (HcaC) and a ferredoxin reductase (HcaD).</text>
</comment>
<comment type="similarity">
    <text evidence="1">Belongs to the bacterial ring-hydroxylating dioxygenase beta subunit family.</text>
</comment>